<proteinExistence type="inferred from homology"/>
<comment type="function">
    <text evidence="1">Involved in transcription antitermination. Required for transcription of ribosomal RNA (rRNA) genes. Binds specifically to the boxA antiterminator sequence of the ribosomal RNA (rrn) operons.</text>
</comment>
<comment type="similarity">
    <text evidence="1">Belongs to the NusB family.</text>
</comment>
<dbReference type="EMBL" id="CP000158">
    <property type="protein sequence ID" value="ABI78501.1"/>
    <property type="molecule type" value="Genomic_DNA"/>
</dbReference>
<dbReference type="RefSeq" id="WP_011647051.1">
    <property type="nucleotide sequence ID" value="NC_008358.1"/>
</dbReference>
<dbReference type="SMR" id="Q0C0J1"/>
<dbReference type="STRING" id="228405.HNE_2054"/>
<dbReference type="KEGG" id="hne:HNE_2054"/>
<dbReference type="eggNOG" id="COG0781">
    <property type="taxonomic scope" value="Bacteria"/>
</dbReference>
<dbReference type="HOGENOM" id="CLU_087843_4_0_5"/>
<dbReference type="Proteomes" id="UP000001959">
    <property type="component" value="Chromosome"/>
</dbReference>
<dbReference type="GO" id="GO:0003723">
    <property type="term" value="F:RNA binding"/>
    <property type="evidence" value="ECO:0007669"/>
    <property type="project" value="UniProtKB-UniRule"/>
</dbReference>
<dbReference type="GO" id="GO:0006353">
    <property type="term" value="P:DNA-templated transcription termination"/>
    <property type="evidence" value="ECO:0007669"/>
    <property type="project" value="UniProtKB-UniRule"/>
</dbReference>
<dbReference type="GO" id="GO:0031564">
    <property type="term" value="P:transcription antitermination"/>
    <property type="evidence" value="ECO:0007669"/>
    <property type="project" value="UniProtKB-KW"/>
</dbReference>
<dbReference type="Gene3D" id="1.10.940.10">
    <property type="entry name" value="NusB-like"/>
    <property type="match status" value="1"/>
</dbReference>
<dbReference type="HAMAP" id="MF_00073">
    <property type="entry name" value="NusB"/>
    <property type="match status" value="1"/>
</dbReference>
<dbReference type="InterPro" id="IPR035926">
    <property type="entry name" value="NusB-like_sf"/>
</dbReference>
<dbReference type="InterPro" id="IPR011605">
    <property type="entry name" value="NusB_fam"/>
</dbReference>
<dbReference type="InterPro" id="IPR006027">
    <property type="entry name" value="NusB_RsmB_TIM44"/>
</dbReference>
<dbReference type="NCBIfam" id="TIGR01951">
    <property type="entry name" value="nusB"/>
    <property type="match status" value="1"/>
</dbReference>
<dbReference type="Pfam" id="PF01029">
    <property type="entry name" value="NusB"/>
    <property type="match status" value="1"/>
</dbReference>
<dbReference type="SUPFAM" id="SSF48013">
    <property type="entry name" value="NusB-like"/>
    <property type="match status" value="1"/>
</dbReference>
<protein>
    <recommendedName>
        <fullName evidence="1">Transcription antitermination protein NusB</fullName>
    </recommendedName>
    <alternativeName>
        <fullName evidence="1">Antitermination factor NusB</fullName>
    </alternativeName>
</protein>
<evidence type="ECO:0000255" key="1">
    <source>
        <dbReference type="HAMAP-Rule" id="MF_00073"/>
    </source>
</evidence>
<organism>
    <name type="scientific">Hyphomonas neptunium (strain ATCC 15444)</name>
    <dbReference type="NCBI Taxonomy" id="228405"/>
    <lineage>
        <taxon>Bacteria</taxon>
        <taxon>Pseudomonadati</taxon>
        <taxon>Pseudomonadota</taxon>
        <taxon>Alphaproteobacteria</taxon>
        <taxon>Hyphomonadales</taxon>
        <taxon>Hyphomonadaceae</taxon>
        <taxon>Hyphomonas</taxon>
    </lineage>
</organism>
<keyword id="KW-1185">Reference proteome</keyword>
<keyword id="KW-0694">RNA-binding</keyword>
<keyword id="KW-0804">Transcription</keyword>
<keyword id="KW-0889">Transcription antitermination</keyword>
<keyword id="KW-0805">Transcription regulation</keyword>
<reference key="1">
    <citation type="journal article" date="2006" name="J. Bacteriol.">
        <title>Comparative genomic evidence for a close relationship between the dimorphic prosthecate bacteria Hyphomonas neptunium and Caulobacter crescentus.</title>
        <authorList>
            <person name="Badger J.H."/>
            <person name="Hoover T.R."/>
            <person name="Brun Y.V."/>
            <person name="Weiner R.M."/>
            <person name="Laub M.T."/>
            <person name="Alexandre G."/>
            <person name="Mrazek J."/>
            <person name="Ren Q."/>
            <person name="Paulsen I.T."/>
            <person name="Nelson K.E."/>
            <person name="Khouri H.M."/>
            <person name="Radune D."/>
            <person name="Sosa J."/>
            <person name="Dodson R.J."/>
            <person name="Sullivan S.A."/>
            <person name="Rosovitz M.J."/>
            <person name="Madupu R."/>
            <person name="Brinkac L.M."/>
            <person name="Durkin A.S."/>
            <person name="Daugherty S.C."/>
            <person name="Kothari S.P."/>
            <person name="Giglio M.G."/>
            <person name="Zhou L."/>
            <person name="Haft D.H."/>
            <person name="Selengut J.D."/>
            <person name="Davidsen T.M."/>
            <person name="Yang Q."/>
            <person name="Zafar N."/>
            <person name="Ward N.L."/>
        </authorList>
    </citation>
    <scope>NUCLEOTIDE SEQUENCE [LARGE SCALE GENOMIC DNA]</scope>
    <source>
        <strain>ATCC 15444</strain>
    </source>
</reference>
<sequence length="154" mass="17065">MTQEMPFDVTRARRAGARLAAVQALYEMEQTEKSARATIREFMEDRLGLGPDGTPVEDADPDLFKSIVNSVVEHQAKIDTAILARLAEGWKLTRLDATMRALLRAGAAEFIAHQELSDAIILSEYVSLAHDFFDEGDAKFANAVLQNMGRDLRA</sequence>
<name>NUSB_HYPNA</name>
<feature type="chain" id="PRO_0000265532" description="Transcription antitermination protein NusB">
    <location>
        <begin position="1"/>
        <end position="154"/>
    </location>
</feature>
<gene>
    <name evidence="1" type="primary">nusB</name>
    <name type="ordered locus">HNE_2054</name>
</gene>
<accession>Q0C0J1</accession>